<gene>
    <name type="primary">otud6b</name>
</gene>
<evidence type="ECO:0000250" key="1"/>
<evidence type="ECO:0000250" key="2">
    <source>
        <dbReference type="UniProtKB" id="Q8N6M0"/>
    </source>
</evidence>
<evidence type="ECO:0000255" key="3">
    <source>
        <dbReference type="PROSITE-ProRule" id="PRU00139"/>
    </source>
</evidence>
<evidence type="ECO:0000256" key="4">
    <source>
        <dbReference type="SAM" id="MobiDB-lite"/>
    </source>
</evidence>
<evidence type="ECO:0000305" key="5"/>
<keyword id="KW-0378">Hydrolase</keyword>
<keyword id="KW-0645">Protease</keyword>
<keyword id="KW-1185">Reference proteome</keyword>
<keyword id="KW-0788">Thiol protease</keyword>
<keyword id="KW-0833">Ubl conjugation pathway</keyword>
<sequence length="294" mass="33367">MDEAEGNSEESGLIKQHRKEKRDLQAKIQSMKNSVPKNDKKRRKQLTEDIAKLEADLDVRHKEELEAFAQKQPEPTQVSGITNGVTSLDLGNEAPVQQPRQSKAQKRREKKAAQEKERDERIAEAEIANLSGARHLESQKLARILAERELQIRQIPSDGHCMYRAIEHQLRERGNDLTVANLRSQTADYMQNHAEDFLPFLTNSSTGDMYTQEEFLKYCTDIVNTPAWGGQLELRALSHILKTAIEVIQAESSPIVIGEEYSSKAITLVYMRHAYGLGEHYNSVELLDTSTENS</sequence>
<accession>Q5M8L0</accession>
<organism>
    <name type="scientific">Xenopus tropicalis</name>
    <name type="common">Western clawed frog</name>
    <name type="synonym">Silurana tropicalis</name>
    <dbReference type="NCBI Taxonomy" id="8364"/>
    <lineage>
        <taxon>Eukaryota</taxon>
        <taxon>Metazoa</taxon>
        <taxon>Chordata</taxon>
        <taxon>Craniata</taxon>
        <taxon>Vertebrata</taxon>
        <taxon>Euteleostomi</taxon>
        <taxon>Amphibia</taxon>
        <taxon>Batrachia</taxon>
        <taxon>Anura</taxon>
        <taxon>Pipoidea</taxon>
        <taxon>Pipidae</taxon>
        <taxon>Xenopodinae</taxon>
        <taxon>Xenopus</taxon>
        <taxon>Silurana</taxon>
    </lineage>
</organism>
<reference key="1">
    <citation type="submission" date="2004-12" db="EMBL/GenBank/DDBJ databases">
        <authorList>
            <consortium name="NIH - Xenopus Gene Collection (XGC) project"/>
        </authorList>
    </citation>
    <scope>NUCLEOTIDE SEQUENCE [LARGE SCALE MRNA]</scope>
</reference>
<proteinExistence type="evidence at transcript level"/>
<protein>
    <recommendedName>
        <fullName evidence="5">Deubiquitinase OTUD6B</fullName>
        <ecNumber evidence="2">3.4.19.12</ecNumber>
    </recommendedName>
</protein>
<name>OTU6B_XENTR</name>
<feature type="chain" id="PRO_0000076284" description="Deubiquitinase OTUD6B">
    <location>
        <begin position="1"/>
        <end position="294"/>
    </location>
</feature>
<feature type="domain" description="OTU" evidence="3">
    <location>
        <begin position="150"/>
        <end position="287"/>
    </location>
</feature>
<feature type="region of interest" description="Disordered" evidence="4">
    <location>
        <begin position="1"/>
        <end position="46"/>
    </location>
</feature>
<feature type="region of interest" description="Disordered" evidence="4">
    <location>
        <begin position="67"/>
        <end position="120"/>
    </location>
</feature>
<feature type="region of interest" description="Cys-loop" evidence="1">
    <location>
        <begin position="155"/>
        <end position="161"/>
    </location>
</feature>
<feature type="region of interest" description="Variable-loop" evidence="1">
    <location>
        <begin position="222"/>
        <end position="232"/>
    </location>
</feature>
<feature type="region of interest" description="His-loop" evidence="1">
    <location>
        <begin position="270"/>
        <end position="280"/>
    </location>
</feature>
<feature type="compositionally biased region" description="Polar residues" evidence="4">
    <location>
        <begin position="27"/>
        <end position="36"/>
    </location>
</feature>
<feature type="compositionally biased region" description="Polar residues" evidence="4">
    <location>
        <begin position="73"/>
        <end position="86"/>
    </location>
</feature>
<feature type="compositionally biased region" description="Basic and acidic residues" evidence="4">
    <location>
        <begin position="111"/>
        <end position="120"/>
    </location>
</feature>
<feature type="active site" evidence="1">
    <location>
        <position position="158"/>
    </location>
</feature>
<feature type="active site" description="Nucleophile" evidence="2">
    <location>
        <position position="161"/>
    </location>
</feature>
<feature type="active site" evidence="1">
    <location>
        <position position="280"/>
    </location>
</feature>
<dbReference type="EC" id="3.4.19.12" evidence="2"/>
<dbReference type="EMBL" id="BC087978">
    <property type="protein sequence ID" value="AAH87978.1"/>
    <property type="molecule type" value="mRNA"/>
</dbReference>
<dbReference type="RefSeq" id="NP_001011269.1">
    <property type="nucleotide sequence ID" value="NM_001011269.1"/>
</dbReference>
<dbReference type="SMR" id="Q5M8L0"/>
<dbReference type="FunCoup" id="Q5M8L0">
    <property type="interactions" value="3061"/>
</dbReference>
<dbReference type="STRING" id="8364.ENSXETP00000054791"/>
<dbReference type="MEROPS" id="C85.008"/>
<dbReference type="PaxDb" id="8364-ENSXETP00000031929"/>
<dbReference type="DNASU" id="496720"/>
<dbReference type="GeneID" id="496720"/>
<dbReference type="KEGG" id="xtr:496720"/>
<dbReference type="AGR" id="Xenbase:XB-GENE-985119"/>
<dbReference type="CTD" id="51633"/>
<dbReference type="Xenbase" id="XB-GENE-985119">
    <property type="gene designation" value="otud6b"/>
</dbReference>
<dbReference type="eggNOG" id="KOG2606">
    <property type="taxonomic scope" value="Eukaryota"/>
</dbReference>
<dbReference type="HOGENOM" id="CLU_034963_0_0_1"/>
<dbReference type="InParanoid" id="Q5M8L0"/>
<dbReference type="OMA" id="YELGAHY"/>
<dbReference type="OrthoDB" id="415023at2759"/>
<dbReference type="PhylomeDB" id="Q5M8L0"/>
<dbReference type="Proteomes" id="UP000008143">
    <property type="component" value="Chromosome 6"/>
</dbReference>
<dbReference type="Bgee" id="ENSXETG00000014596">
    <property type="expression patterns" value="Expressed in ovary and 12 other cell types or tissues"/>
</dbReference>
<dbReference type="GO" id="GO:0004843">
    <property type="term" value="F:cysteine-type deubiquitinase activity"/>
    <property type="evidence" value="ECO:0000250"/>
    <property type="project" value="UniProtKB"/>
</dbReference>
<dbReference type="GO" id="GO:0016579">
    <property type="term" value="P:protein deubiquitination"/>
    <property type="evidence" value="ECO:0000250"/>
    <property type="project" value="UniProtKB"/>
</dbReference>
<dbReference type="GO" id="GO:0006508">
    <property type="term" value="P:proteolysis"/>
    <property type="evidence" value="ECO:0007669"/>
    <property type="project" value="UniProtKB-KW"/>
</dbReference>
<dbReference type="CDD" id="cd22761">
    <property type="entry name" value="OTU_OTUD6"/>
    <property type="match status" value="1"/>
</dbReference>
<dbReference type="FunFam" id="3.90.70.80:FF:000003">
    <property type="entry name" value="OTU domain-containing protein 6B"/>
    <property type="match status" value="1"/>
</dbReference>
<dbReference type="Gene3D" id="3.90.70.80">
    <property type="match status" value="1"/>
</dbReference>
<dbReference type="InterPro" id="IPR003323">
    <property type="entry name" value="OTU_dom"/>
</dbReference>
<dbReference type="InterPro" id="IPR049772">
    <property type="entry name" value="OTU_OTUD6"/>
</dbReference>
<dbReference type="InterPro" id="IPR038765">
    <property type="entry name" value="Papain-like_cys_pep_sf"/>
</dbReference>
<dbReference type="InterPro" id="IPR050704">
    <property type="entry name" value="Peptidase_C85-like"/>
</dbReference>
<dbReference type="PANTHER" id="PTHR12419:SF10">
    <property type="entry name" value="DEUBIQUITINASE OTUD6B"/>
    <property type="match status" value="1"/>
</dbReference>
<dbReference type="PANTHER" id="PTHR12419">
    <property type="entry name" value="OTU DOMAIN CONTAINING PROTEIN"/>
    <property type="match status" value="1"/>
</dbReference>
<dbReference type="Pfam" id="PF02338">
    <property type="entry name" value="OTU"/>
    <property type="match status" value="1"/>
</dbReference>
<dbReference type="SUPFAM" id="SSF54001">
    <property type="entry name" value="Cysteine proteinases"/>
    <property type="match status" value="1"/>
</dbReference>
<dbReference type="PROSITE" id="PS50802">
    <property type="entry name" value="OTU"/>
    <property type="match status" value="1"/>
</dbReference>
<comment type="function">
    <text evidence="2">Deubiquitinating enzyme that may play a role in the ubiquitin-dependent regulation of different cellular processes.</text>
</comment>
<comment type="catalytic activity">
    <reaction evidence="2">
        <text>Thiol-dependent hydrolysis of ester, thioester, amide, peptide and isopeptide bonds formed by the C-terminal Gly of ubiquitin (a 76-residue protein attached to proteins as an intracellular targeting signal).</text>
        <dbReference type="EC" id="3.4.19.12"/>
    </reaction>
</comment>